<name>RL7_PORGI</name>
<sequence>MADIKAIAEQLVNLTVKEVSELATILKEEYGIEPAAAAVAVAAAPGAAGAAAEEEKTSFDVVLKSAGAAKLQVVKAVKEQCGLGLKEAKDLVDAAPSTVKEGVDKATAEALKKALEEAGAEVELK</sequence>
<gene>
    <name evidence="1" type="primary">rplL</name>
    <name type="ordered locus">PG_0393</name>
</gene>
<accession>Q7MX28</accession>
<evidence type="ECO:0000255" key="1">
    <source>
        <dbReference type="HAMAP-Rule" id="MF_00368"/>
    </source>
</evidence>
<evidence type="ECO:0000305" key="2"/>
<dbReference type="EMBL" id="AE015924">
    <property type="protein sequence ID" value="AAQ65598.1"/>
    <property type="molecule type" value="Genomic_DNA"/>
</dbReference>
<dbReference type="RefSeq" id="WP_010956001.1">
    <property type="nucleotide sequence ID" value="NC_002950.2"/>
</dbReference>
<dbReference type="SMR" id="Q7MX28"/>
<dbReference type="STRING" id="242619.PG_0393"/>
<dbReference type="EnsemblBacteria" id="AAQ65598">
    <property type="protein sequence ID" value="AAQ65598"/>
    <property type="gene ID" value="PG_0393"/>
</dbReference>
<dbReference type="GeneID" id="29256746"/>
<dbReference type="KEGG" id="pgi:PG_0393"/>
<dbReference type="eggNOG" id="COG0222">
    <property type="taxonomic scope" value="Bacteria"/>
</dbReference>
<dbReference type="HOGENOM" id="CLU_086499_3_1_10"/>
<dbReference type="Proteomes" id="UP000000588">
    <property type="component" value="Chromosome"/>
</dbReference>
<dbReference type="GO" id="GO:0022625">
    <property type="term" value="C:cytosolic large ribosomal subunit"/>
    <property type="evidence" value="ECO:0007669"/>
    <property type="project" value="TreeGrafter"/>
</dbReference>
<dbReference type="GO" id="GO:0003729">
    <property type="term" value="F:mRNA binding"/>
    <property type="evidence" value="ECO:0007669"/>
    <property type="project" value="TreeGrafter"/>
</dbReference>
<dbReference type="GO" id="GO:0003735">
    <property type="term" value="F:structural constituent of ribosome"/>
    <property type="evidence" value="ECO:0007669"/>
    <property type="project" value="InterPro"/>
</dbReference>
<dbReference type="GO" id="GO:0006412">
    <property type="term" value="P:translation"/>
    <property type="evidence" value="ECO:0007669"/>
    <property type="project" value="UniProtKB-UniRule"/>
</dbReference>
<dbReference type="CDD" id="cd00387">
    <property type="entry name" value="Ribosomal_L7_L12"/>
    <property type="match status" value="1"/>
</dbReference>
<dbReference type="FunFam" id="3.30.1390.10:FF:000001">
    <property type="entry name" value="50S ribosomal protein L7/L12"/>
    <property type="match status" value="1"/>
</dbReference>
<dbReference type="Gene3D" id="3.30.1390.10">
    <property type="match status" value="1"/>
</dbReference>
<dbReference type="Gene3D" id="1.20.5.710">
    <property type="entry name" value="Single helix bin"/>
    <property type="match status" value="1"/>
</dbReference>
<dbReference type="HAMAP" id="MF_00368">
    <property type="entry name" value="Ribosomal_bL12"/>
    <property type="match status" value="1"/>
</dbReference>
<dbReference type="InterPro" id="IPR000206">
    <property type="entry name" value="Ribosomal_bL12"/>
</dbReference>
<dbReference type="InterPro" id="IPR013823">
    <property type="entry name" value="Ribosomal_bL12_C"/>
</dbReference>
<dbReference type="InterPro" id="IPR014719">
    <property type="entry name" value="Ribosomal_bL12_C/ClpS-like"/>
</dbReference>
<dbReference type="InterPro" id="IPR008932">
    <property type="entry name" value="Ribosomal_bL12_oligo"/>
</dbReference>
<dbReference type="InterPro" id="IPR036235">
    <property type="entry name" value="Ribosomal_bL12_oligo_N_sf"/>
</dbReference>
<dbReference type="NCBIfam" id="TIGR00855">
    <property type="entry name" value="L12"/>
    <property type="match status" value="1"/>
</dbReference>
<dbReference type="PANTHER" id="PTHR45987">
    <property type="entry name" value="39S RIBOSOMAL PROTEIN L12"/>
    <property type="match status" value="1"/>
</dbReference>
<dbReference type="PANTHER" id="PTHR45987:SF4">
    <property type="entry name" value="LARGE RIBOSOMAL SUBUNIT PROTEIN BL12M"/>
    <property type="match status" value="1"/>
</dbReference>
<dbReference type="Pfam" id="PF00542">
    <property type="entry name" value="Ribosomal_L12"/>
    <property type="match status" value="1"/>
</dbReference>
<dbReference type="Pfam" id="PF16320">
    <property type="entry name" value="Ribosomal_L12_N"/>
    <property type="match status" value="1"/>
</dbReference>
<dbReference type="SUPFAM" id="SSF54736">
    <property type="entry name" value="ClpS-like"/>
    <property type="match status" value="1"/>
</dbReference>
<dbReference type="SUPFAM" id="SSF48300">
    <property type="entry name" value="Ribosomal protein L7/12, oligomerisation (N-terminal) domain"/>
    <property type="match status" value="1"/>
</dbReference>
<feature type="chain" id="PRO_0000243464" description="Large ribosomal subunit protein bL12">
    <location>
        <begin position="1"/>
        <end position="125"/>
    </location>
</feature>
<organism>
    <name type="scientific">Porphyromonas gingivalis (strain ATCC BAA-308 / W83)</name>
    <dbReference type="NCBI Taxonomy" id="242619"/>
    <lineage>
        <taxon>Bacteria</taxon>
        <taxon>Pseudomonadati</taxon>
        <taxon>Bacteroidota</taxon>
        <taxon>Bacteroidia</taxon>
        <taxon>Bacteroidales</taxon>
        <taxon>Porphyromonadaceae</taxon>
        <taxon>Porphyromonas</taxon>
    </lineage>
</organism>
<protein>
    <recommendedName>
        <fullName evidence="1">Large ribosomal subunit protein bL12</fullName>
    </recommendedName>
    <alternativeName>
        <fullName evidence="2">50S ribosomal protein L7/L12</fullName>
    </alternativeName>
</protein>
<proteinExistence type="inferred from homology"/>
<comment type="function">
    <text evidence="1">Forms part of the ribosomal stalk which helps the ribosome interact with GTP-bound translation factors. Is thus essential for accurate translation.</text>
</comment>
<comment type="subunit">
    <text evidence="1">Homodimer. Part of the ribosomal stalk of the 50S ribosomal subunit. Forms a multimeric L10(L12)X complex, where L10 forms an elongated spine to which 2 to 4 L12 dimers bind in a sequential fashion. Binds GTP-bound translation factors.</text>
</comment>
<comment type="similarity">
    <text evidence="1">Belongs to the bacterial ribosomal protein bL12 family.</text>
</comment>
<keyword id="KW-1185">Reference proteome</keyword>
<keyword id="KW-0687">Ribonucleoprotein</keyword>
<keyword id="KW-0689">Ribosomal protein</keyword>
<reference key="1">
    <citation type="journal article" date="2003" name="J. Bacteriol.">
        <title>Complete genome sequence of the oral pathogenic bacterium Porphyromonas gingivalis strain W83.</title>
        <authorList>
            <person name="Nelson K.E."/>
            <person name="Fleischmann R.D."/>
            <person name="DeBoy R.T."/>
            <person name="Paulsen I.T."/>
            <person name="Fouts D.E."/>
            <person name="Eisen J.A."/>
            <person name="Daugherty S.C."/>
            <person name="Dodson R.J."/>
            <person name="Durkin A.S."/>
            <person name="Gwinn M.L."/>
            <person name="Haft D.H."/>
            <person name="Kolonay J.F."/>
            <person name="Nelson W.C."/>
            <person name="Mason T.M."/>
            <person name="Tallon L."/>
            <person name="Gray J."/>
            <person name="Granger D."/>
            <person name="Tettelin H."/>
            <person name="Dong H."/>
            <person name="Galvin J.L."/>
            <person name="Duncan M.J."/>
            <person name="Dewhirst F.E."/>
            <person name="Fraser C.M."/>
        </authorList>
    </citation>
    <scope>NUCLEOTIDE SEQUENCE [LARGE SCALE GENOMIC DNA]</scope>
    <source>
        <strain>ATCC BAA-308 / W83</strain>
    </source>
</reference>